<proteinExistence type="inferred from homology"/>
<evidence type="ECO:0000250" key="1"/>
<evidence type="ECO:0000255" key="2"/>
<evidence type="ECO:0000305" key="3"/>
<accession>Q9LVD2</accession>
<dbReference type="EC" id="1.14.-.-"/>
<dbReference type="EMBL" id="AB019233">
    <property type="protein sequence ID" value="BAA96949.1"/>
    <property type="molecule type" value="Genomic_DNA"/>
</dbReference>
<dbReference type="EMBL" id="CP002688">
    <property type="protein sequence ID" value="AED96872.1"/>
    <property type="molecule type" value="Genomic_DNA"/>
</dbReference>
<dbReference type="RefSeq" id="NP_200536.3">
    <property type="nucleotide sequence ID" value="NM_125108.4"/>
</dbReference>
<dbReference type="SMR" id="Q9LVD2"/>
<dbReference type="FunCoup" id="Q9LVD2">
    <property type="interactions" value="426"/>
</dbReference>
<dbReference type="STRING" id="3702.Q9LVD2"/>
<dbReference type="PaxDb" id="3702-AT5G57260.1"/>
<dbReference type="ProteomicsDB" id="240578"/>
<dbReference type="EnsemblPlants" id="AT5G57260.1">
    <property type="protein sequence ID" value="AT5G57260.1"/>
    <property type="gene ID" value="AT5G57260"/>
</dbReference>
<dbReference type="GeneID" id="835831"/>
<dbReference type="Gramene" id="AT5G57260.1">
    <property type="protein sequence ID" value="AT5G57260.1"/>
    <property type="gene ID" value="AT5G57260"/>
</dbReference>
<dbReference type="KEGG" id="ath:AT5G57260"/>
<dbReference type="Araport" id="AT5G57260"/>
<dbReference type="TAIR" id="AT5G57260">
    <property type="gene designation" value="CYP71B10"/>
</dbReference>
<dbReference type="eggNOG" id="KOG0156">
    <property type="taxonomic scope" value="Eukaryota"/>
</dbReference>
<dbReference type="HOGENOM" id="CLU_001570_4_1_1"/>
<dbReference type="InParanoid" id="Q9LVD2"/>
<dbReference type="OMA" id="ERFMDCD"/>
<dbReference type="OrthoDB" id="2789670at2759"/>
<dbReference type="PhylomeDB" id="Q9LVD2"/>
<dbReference type="BioCyc" id="ARA:AT5G57260-MONOMER"/>
<dbReference type="PRO" id="PR:Q9LVD2"/>
<dbReference type="Proteomes" id="UP000006548">
    <property type="component" value="Chromosome 5"/>
</dbReference>
<dbReference type="ExpressionAtlas" id="Q9LVD2">
    <property type="expression patterns" value="baseline and differential"/>
</dbReference>
<dbReference type="GO" id="GO:0016020">
    <property type="term" value="C:membrane"/>
    <property type="evidence" value="ECO:0007669"/>
    <property type="project" value="UniProtKB-SubCell"/>
</dbReference>
<dbReference type="GO" id="GO:0020037">
    <property type="term" value="F:heme binding"/>
    <property type="evidence" value="ECO:0007669"/>
    <property type="project" value="InterPro"/>
</dbReference>
<dbReference type="GO" id="GO:0005506">
    <property type="term" value="F:iron ion binding"/>
    <property type="evidence" value="ECO:0007669"/>
    <property type="project" value="InterPro"/>
</dbReference>
<dbReference type="GO" id="GO:0004497">
    <property type="term" value="F:monooxygenase activity"/>
    <property type="evidence" value="ECO:0007669"/>
    <property type="project" value="UniProtKB-KW"/>
</dbReference>
<dbReference type="GO" id="GO:0016705">
    <property type="term" value="F:oxidoreductase activity, acting on paired donors, with incorporation or reduction of molecular oxygen"/>
    <property type="evidence" value="ECO:0007669"/>
    <property type="project" value="InterPro"/>
</dbReference>
<dbReference type="CDD" id="cd11072">
    <property type="entry name" value="CYP71-like"/>
    <property type="match status" value="1"/>
</dbReference>
<dbReference type="FunFam" id="1.10.630.10:FF:000011">
    <property type="entry name" value="Cytochrome P450 83B1"/>
    <property type="match status" value="1"/>
</dbReference>
<dbReference type="Gene3D" id="1.10.630.10">
    <property type="entry name" value="Cytochrome P450"/>
    <property type="match status" value="1"/>
</dbReference>
<dbReference type="InterPro" id="IPR001128">
    <property type="entry name" value="Cyt_P450"/>
</dbReference>
<dbReference type="InterPro" id="IPR017972">
    <property type="entry name" value="Cyt_P450_CS"/>
</dbReference>
<dbReference type="InterPro" id="IPR002401">
    <property type="entry name" value="Cyt_P450_E_grp-I"/>
</dbReference>
<dbReference type="InterPro" id="IPR036396">
    <property type="entry name" value="Cyt_P450_sf"/>
</dbReference>
<dbReference type="PANTHER" id="PTHR47955:SF19">
    <property type="entry name" value="CYTOCHROME P450 71A9-LIKE ISOFORM X1"/>
    <property type="match status" value="1"/>
</dbReference>
<dbReference type="PANTHER" id="PTHR47955">
    <property type="entry name" value="CYTOCHROME P450 FAMILY 71 PROTEIN"/>
    <property type="match status" value="1"/>
</dbReference>
<dbReference type="Pfam" id="PF00067">
    <property type="entry name" value="p450"/>
    <property type="match status" value="1"/>
</dbReference>
<dbReference type="PRINTS" id="PR00463">
    <property type="entry name" value="EP450I"/>
</dbReference>
<dbReference type="PRINTS" id="PR00385">
    <property type="entry name" value="P450"/>
</dbReference>
<dbReference type="SUPFAM" id="SSF48264">
    <property type="entry name" value="Cytochrome P450"/>
    <property type="match status" value="1"/>
</dbReference>
<dbReference type="PROSITE" id="PS00086">
    <property type="entry name" value="CYTOCHROME_P450"/>
    <property type="match status" value="1"/>
</dbReference>
<name>C71BA_ARATH</name>
<gene>
    <name type="primary">CYP71B10</name>
    <name type="ordered locus">At5g57260</name>
    <name type="ORF">MJB24.7</name>
</gene>
<comment type="cofactor">
    <cofactor evidence="1">
        <name>heme</name>
        <dbReference type="ChEBI" id="CHEBI:30413"/>
    </cofactor>
</comment>
<comment type="subcellular location">
    <subcellularLocation>
        <location evidence="3">Membrane</location>
        <topology evidence="3">Single-pass membrane protein</topology>
    </subcellularLocation>
</comment>
<comment type="similarity">
    <text evidence="3">Belongs to the cytochrome P450 family.</text>
</comment>
<organism>
    <name type="scientific">Arabidopsis thaliana</name>
    <name type="common">Mouse-ear cress</name>
    <dbReference type="NCBI Taxonomy" id="3702"/>
    <lineage>
        <taxon>Eukaryota</taxon>
        <taxon>Viridiplantae</taxon>
        <taxon>Streptophyta</taxon>
        <taxon>Embryophyta</taxon>
        <taxon>Tracheophyta</taxon>
        <taxon>Spermatophyta</taxon>
        <taxon>Magnoliopsida</taxon>
        <taxon>eudicotyledons</taxon>
        <taxon>Gunneridae</taxon>
        <taxon>Pentapetalae</taxon>
        <taxon>rosids</taxon>
        <taxon>malvids</taxon>
        <taxon>Brassicales</taxon>
        <taxon>Brassicaceae</taxon>
        <taxon>Camelineae</taxon>
        <taxon>Arabidopsis</taxon>
    </lineage>
</organism>
<sequence length="502" mass="57505">MTVLWFVSLILLISILLVAVKHSKRRWVRQPPSPPGLPIIGNLHQLGELPHQSLCKLSKKYGPVMLLKLGRVPTVIVSTPETAKQVLKDYDLHCCSRPSLEGTRKLSYNYLDIAFSRFDDYWKELRKLCVEELFCNKRINSIQPIKEAEMEKLIDSIAESASQKTLVNLSDTFLSLNVNVICKAVFGVNFQGTVLNNDKFQDLVHEALEMLGSFSASDFFPYVGWIVDWFTGLHARRERSVRDLDAFYEQMIDLHLQKNREESEDDFVDLLLRLEKEEAVLGYGKLTRNHIKAILMNILLGGINTSAITMTWAMAELIRNPRVMKKVQSEIRAQIGKNNKTRIISLDEINHLSYLNMVIKETCRLHPVAPLLVPREVISEFKINGYTIQPKTRLHVNVWAIGRDPEIWKDPEEFLPERFMDCDIDVKGQDYELLPFGSGRRICPAVYMGITTVEFGLANLLYHFDWKLPEGVAVEDIYMDEASGLTSHKKHDLLLVPVKSLV</sequence>
<feature type="chain" id="PRO_0000052088" description="Cytochrome P450 71B10">
    <location>
        <begin position="1"/>
        <end position="502"/>
    </location>
</feature>
<feature type="transmembrane region" description="Helical" evidence="2">
    <location>
        <begin position="1"/>
        <end position="21"/>
    </location>
</feature>
<feature type="binding site" description="axial binding residue" evidence="1">
    <location>
        <position position="443"/>
    </location>
    <ligand>
        <name>heme</name>
        <dbReference type="ChEBI" id="CHEBI:30413"/>
    </ligand>
    <ligandPart>
        <name>Fe</name>
        <dbReference type="ChEBI" id="CHEBI:18248"/>
    </ligandPart>
</feature>
<protein>
    <recommendedName>
        <fullName>Cytochrome P450 71B10</fullName>
        <ecNumber>1.14.-.-</ecNumber>
    </recommendedName>
</protein>
<reference key="1">
    <citation type="journal article" date="2000" name="DNA Res.">
        <title>Structural analysis of Arabidopsis thaliana chromosome 5. X. Sequence features of the regions of 3,076,755 bp covered by sixty P1 and TAC clones.</title>
        <authorList>
            <person name="Sato S."/>
            <person name="Nakamura Y."/>
            <person name="Kaneko T."/>
            <person name="Katoh T."/>
            <person name="Asamizu E."/>
            <person name="Kotani H."/>
            <person name="Tabata S."/>
        </authorList>
    </citation>
    <scope>NUCLEOTIDE SEQUENCE [LARGE SCALE GENOMIC DNA]</scope>
    <source>
        <strain>cv. Columbia</strain>
    </source>
</reference>
<reference key="2">
    <citation type="journal article" date="2017" name="Plant J.">
        <title>Araport11: a complete reannotation of the Arabidopsis thaliana reference genome.</title>
        <authorList>
            <person name="Cheng C.Y."/>
            <person name="Krishnakumar V."/>
            <person name="Chan A.P."/>
            <person name="Thibaud-Nissen F."/>
            <person name="Schobel S."/>
            <person name="Town C.D."/>
        </authorList>
    </citation>
    <scope>GENOME REANNOTATION</scope>
    <source>
        <strain>cv. Columbia</strain>
    </source>
</reference>
<keyword id="KW-0349">Heme</keyword>
<keyword id="KW-0408">Iron</keyword>
<keyword id="KW-0472">Membrane</keyword>
<keyword id="KW-0479">Metal-binding</keyword>
<keyword id="KW-0503">Monooxygenase</keyword>
<keyword id="KW-0560">Oxidoreductase</keyword>
<keyword id="KW-1185">Reference proteome</keyword>
<keyword id="KW-0812">Transmembrane</keyword>
<keyword id="KW-1133">Transmembrane helix</keyword>